<keyword id="KW-1015">Disulfide bond</keyword>
<keyword id="KW-0872">Ion channel impairing toxin</keyword>
<keyword id="KW-0528">Neurotoxin</keyword>
<keyword id="KW-0873">Pyrrolidone carboxylic acid</keyword>
<keyword id="KW-0964">Secreted</keyword>
<keyword id="KW-0800">Toxin</keyword>
<keyword id="KW-0738">Voltage-gated sodium channel impairing toxin</keyword>
<organism>
    <name type="scientific">Conus consors</name>
    <name type="common">Singed cone</name>
    <dbReference type="NCBI Taxonomy" id="101297"/>
    <lineage>
        <taxon>Eukaryota</taxon>
        <taxon>Metazoa</taxon>
        <taxon>Spiralia</taxon>
        <taxon>Lophotrochozoa</taxon>
        <taxon>Mollusca</taxon>
        <taxon>Gastropoda</taxon>
        <taxon>Caenogastropoda</taxon>
        <taxon>Neogastropoda</taxon>
        <taxon>Conoidea</taxon>
        <taxon>Conidae</taxon>
        <taxon>Conus</taxon>
        <taxon>Pionoconus</taxon>
    </lineage>
</organism>
<reference key="1">
    <citation type="journal article" date="2006" name="Biochemistry">
        <title>Structural and functional diversities among mu-conotoxins targeting TTX-resistant sodium channels.</title>
        <authorList>
            <person name="Zhang M.-M."/>
            <person name="Fiedler B."/>
            <person name="Green B.R."/>
            <person name="Catlin P."/>
            <person name="Watkins M."/>
            <person name="Garrett J.E."/>
            <person name="Smith B.J."/>
            <person name="Yoshikami D."/>
            <person name="Olivera B.M."/>
            <person name="Bulaj G."/>
        </authorList>
    </citation>
    <scope>NUCLEOTIDE SEQUENCE [MRNA]</scope>
    <scope>SYNTHESIS</scope>
    <source>
        <tissue>Venom duct</tissue>
    </source>
</reference>
<reference key="2">
    <citation type="journal article" date="2012" name="J. Proteomics">
        <title>Large-scale discovery of conopeptides and conoproteins in the injectable venom of a fish-hunting cone snail using a combined proteomic and transcriptomic approach.</title>
        <authorList>
            <person name="Violette A."/>
            <person name="Biass D."/>
            <person name="Dutertre S."/>
            <person name="Koua D."/>
            <person name="Piquemal D."/>
            <person name="Pierrat F."/>
            <person name="Stocklin R."/>
            <person name="Favreau P."/>
        </authorList>
    </citation>
    <scope>NUCLEOTIDE SEQUENCE [MRNA]</scope>
    <scope>PYROGLUTAMATE FORMATION AT GLN-1</scope>
    <scope>MASS SPECTROMETRY</scope>
    <scope>IDENTIFICATION BY MASS SPECTROMETRY</scope>
    <source>
        <tissue>Venom</tissue>
        <tissue>Venom duct</tissue>
    </source>
</reference>
<feature type="peptide" id="PRO_0000249199" description="Mu-conotoxin CnIIIB">
    <location>
        <begin position="1"/>
        <end position="25"/>
    </location>
</feature>
<feature type="modified residue" description="Pyrrolidone carboxylic acid; partial" evidence="2">
    <location>
        <position position="1"/>
    </location>
</feature>
<feature type="disulfide bond" evidence="1">
    <location>
        <begin position="3"/>
        <end position="15"/>
    </location>
</feature>
<feature type="disulfide bond" evidence="1">
    <location>
        <begin position="4"/>
        <end position="21"/>
    </location>
</feature>
<feature type="disulfide bond" evidence="1">
    <location>
        <begin position="10"/>
        <end position="22"/>
    </location>
</feature>
<name>CM3B_CONCN</name>
<comment type="function">
    <text>Mu-conotoxins block voltage-gated sodium channels (Nav). This synthetic toxin blocks slightly but irreversibly tetrodotoxin-resistant VGSCs.</text>
</comment>
<comment type="subcellular location">
    <subcellularLocation>
        <location>Secreted</location>
    </subcellularLocation>
</comment>
<comment type="tissue specificity">
    <text>Expressed by the venom duct.</text>
</comment>
<comment type="domain">
    <text>The cysteine framework is III (CC-C-C-CC). Classified in the M-5 branch, since 5 residues stand between the fourth and the fifth cysteine residues.</text>
</comment>
<comment type="mass spectrometry" mass="2939.12" method="Electrospray" evidence="2">
    <text>CnIIIB.</text>
</comment>
<comment type="mass spectrometry" mass="2922.17" method="Electrospray" evidence="2">
    <text>[Gln1]-CnIIIB.</text>
</comment>
<comment type="miscellaneous">
    <text evidence="4">Found in injectable (milked) (IV) venom.</text>
</comment>
<comment type="similarity">
    <text evidence="3">Belongs to the conotoxin M superfamily.</text>
</comment>
<accession>P0C1U0</accession>
<sequence length="25" mass="2947">QGCCGEPNLCFTRWCRNNARCCRQQ</sequence>
<evidence type="ECO:0000250" key="1"/>
<evidence type="ECO:0000269" key="2">
    <source>
    </source>
</evidence>
<evidence type="ECO:0000305" key="3"/>
<evidence type="ECO:0000305" key="4">
    <source>
    </source>
</evidence>
<protein>
    <recommendedName>
        <fullName>Mu-conotoxin CnIIIB</fullName>
    </recommendedName>
</protein>
<dbReference type="ConoServer" id="1690">
    <property type="toxin name" value="CnIIIB"/>
</dbReference>
<dbReference type="GO" id="GO:0005576">
    <property type="term" value="C:extracellular region"/>
    <property type="evidence" value="ECO:0007669"/>
    <property type="project" value="UniProtKB-SubCell"/>
</dbReference>
<dbReference type="GO" id="GO:0017080">
    <property type="term" value="F:sodium channel regulator activity"/>
    <property type="evidence" value="ECO:0007669"/>
    <property type="project" value="UniProtKB-KW"/>
</dbReference>
<dbReference type="GO" id="GO:0090729">
    <property type="term" value="F:toxin activity"/>
    <property type="evidence" value="ECO:0007669"/>
    <property type="project" value="UniProtKB-KW"/>
</dbReference>
<proteinExistence type="evidence at protein level"/>